<dbReference type="EC" id="4.6.1.12" evidence="1"/>
<dbReference type="EMBL" id="CP000901">
    <property type="protein sequence ID" value="ABX88232.1"/>
    <property type="molecule type" value="Genomic_DNA"/>
</dbReference>
<dbReference type="RefSeq" id="WP_002209392.1">
    <property type="nucleotide sequence ID" value="NZ_CP009935.1"/>
</dbReference>
<dbReference type="SMR" id="A9R118"/>
<dbReference type="GeneID" id="96664269"/>
<dbReference type="KEGG" id="ypg:YpAngola_A0963"/>
<dbReference type="PATRIC" id="fig|349746.12.peg.1911"/>
<dbReference type="UniPathway" id="UPA00056">
    <property type="reaction ID" value="UER00095"/>
</dbReference>
<dbReference type="GO" id="GO:0008685">
    <property type="term" value="F:2-C-methyl-D-erythritol 2,4-cyclodiphosphate synthase activity"/>
    <property type="evidence" value="ECO:0007669"/>
    <property type="project" value="UniProtKB-UniRule"/>
</dbReference>
<dbReference type="GO" id="GO:0046872">
    <property type="term" value="F:metal ion binding"/>
    <property type="evidence" value="ECO:0007669"/>
    <property type="project" value="UniProtKB-KW"/>
</dbReference>
<dbReference type="GO" id="GO:0019288">
    <property type="term" value="P:isopentenyl diphosphate biosynthetic process, methylerythritol 4-phosphate pathway"/>
    <property type="evidence" value="ECO:0007669"/>
    <property type="project" value="UniProtKB-UniRule"/>
</dbReference>
<dbReference type="GO" id="GO:0016114">
    <property type="term" value="P:terpenoid biosynthetic process"/>
    <property type="evidence" value="ECO:0007669"/>
    <property type="project" value="InterPro"/>
</dbReference>
<dbReference type="CDD" id="cd00554">
    <property type="entry name" value="MECDP_synthase"/>
    <property type="match status" value="1"/>
</dbReference>
<dbReference type="FunFam" id="3.30.1330.50:FF:000001">
    <property type="entry name" value="2-C-methyl-D-erythritol 2,4-cyclodiphosphate synthase"/>
    <property type="match status" value="1"/>
</dbReference>
<dbReference type="Gene3D" id="3.30.1330.50">
    <property type="entry name" value="2-C-methyl-D-erythritol 2,4-cyclodiphosphate synthase"/>
    <property type="match status" value="1"/>
</dbReference>
<dbReference type="HAMAP" id="MF_00107">
    <property type="entry name" value="IspF"/>
    <property type="match status" value="1"/>
</dbReference>
<dbReference type="InterPro" id="IPR003526">
    <property type="entry name" value="MECDP_synthase"/>
</dbReference>
<dbReference type="InterPro" id="IPR020555">
    <property type="entry name" value="MECDP_synthase_CS"/>
</dbReference>
<dbReference type="InterPro" id="IPR036571">
    <property type="entry name" value="MECDP_synthase_sf"/>
</dbReference>
<dbReference type="NCBIfam" id="TIGR00151">
    <property type="entry name" value="ispF"/>
    <property type="match status" value="1"/>
</dbReference>
<dbReference type="PANTHER" id="PTHR43181">
    <property type="entry name" value="2-C-METHYL-D-ERYTHRITOL 2,4-CYCLODIPHOSPHATE SYNTHASE, CHLOROPLASTIC"/>
    <property type="match status" value="1"/>
</dbReference>
<dbReference type="PANTHER" id="PTHR43181:SF1">
    <property type="entry name" value="2-C-METHYL-D-ERYTHRITOL 2,4-CYCLODIPHOSPHATE SYNTHASE, CHLOROPLASTIC"/>
    <property type="match status" value="1"/>
</dbReference>
<dbReference type="Pfam" id="PF02542">
    <property type="entry name" value="YgbB"/>
    <property type="match status" value="1"/>
</dbReference>
<dbReference type="SUPFAM" id="SSF69765">
    <property type="entry name" value="IpsF-like"/>
    <property type="match status" value="1"/>
</dbReference>
<dbReference type="PROSITE" id="PS01350">
    <property type="entry name" value="ISPF"/>
    <property type="match status" value="1"/>
</dbReference>
<organism>
    <name type="scientific">Yersinia pestis bv. Antiqua (strain Angola)</name>
    <dbReference type="NCBI Taxonomy" id="349746"/>
    <lineage>
        <taxon>Bacteria</taxon>
        <taxon>Pseudomonadati</taxon>
        <taxon>Pseudomonadota</taxon>
        <taxon>Gammaproteobacteria</taxon>
        <taxon>Enterobacterales</taxon>
        <taxon>Yersiniaceae</taxon>
        <taxon>Yersinia</taxon>
    </lineage>
</organism>
<accession>A9R118</accession>
<feature type="chain" id="PRO_1000094299" description="2-C-methyl-D-erythritol 2,4-cyclodiphosphate synthase">
    <location>
        <begin position="1"/>
        <end position="162"/>
    </location>
</feature>
<feature type="binding site" evidence="1">
    <location>
        <begin position="8"/>
        <end position="10"/>
    </location>
    <ligand>
        <name>4-CDP-2-C-methyl-D-erythritol 2-phosphate</name>
        <dbReference type="ChEBI" id="CHEBI:57919"/>
    </ligand>
</feature>
<feature type="binding site" evidence="1">
    <location>
        <position position="8"/>
    </location>
    <ligand>
        <name>a divalent metal cation</name>
        <dbReference type="ChEBI" id="CHEBI:60240"/>
    </ligand>
</feature>
<feature type="binding site" evidence="1">
    <location>
        <position position="10"/>
    </location>
    <ligand>
        <name>a divalent metal cation</name>
        <dbReference type="ChEBI" id="CHEBI:60240"/>
    </ligand>
</feature>
<feature type="binding site" evidence="1">
    <location>
        <begin position="36"/>
        <end position="37"/>
    </location>
    <ligand>
        <name>4-CDP-2-C-methyl-D-erythritol 2-phosphate</name>
        <dbReference type="ChEBI" id="CHEBI:57919"/>
    </ligand>
</feature>
<feature type="binding site" evidence="1">
    <location>
        <position position="44"/>
    </location>
    <ligand>
        <name>a divalent metal cation</name>
        <dbReference type="ChEBI" id="CHEBI:60240"/>
    </ligand>
</feature>
<feature type="binding site" evidence="1">
    <location>
        <begin position="58"/>
        <end position="60"/>
    </location>
    <ligand>
        <name>4-CDP-2-C-methyl-D-erythritol 2-phosphate</name>
        <dbReference type="ChEBI" id="CHEBI:57919"/>
    </ligand>
</feature>
<feature type="binding site" evidence="1">
    <location>
        <begin position="63"/>
        <end position="67"/>
    </location>
    <ligand>
        <name>4-CDP-2-C-methyl-D-erythritol 2-phosphate</name>
        <dbReference type="ChEBI" id="CHEBI:57919"/>
    </ligand>
</feature>
<feature type="binding site" evidence="1">
    <location>
        <begin position="102"/>
        <end position="108"/>
    </location>
    <ligand>
        <name>4-CDP-2-C-methyl-D-erythritol 2-phosphate</name>
        <dbReference type="ChEBI" id="CHEBI:57919"/>
    </ligand>
</feature>
<feature type="binding site" evidence="1">
    <location>
        <begin position="134"/>
        <end position="137"/>
    </location>
    <ligand>
        <name>4-CDP-2-C-methyl-D-erythritol 2-phosphate</name>
        <dbReference type="ChEBI" id="CHEBI:57919"/>
    </ligand>
</feature>
<feature type="binding site" evidence="1">
    <location>
        <position position="141"/>
    </location>
    <ligand>
        <name>4-CDP-2-C-methyl-D-erythritol 2-phosphate</name>
        <dbReference type="ChEBI" id="CHEBI:57919"/>
    </ligand>
</feature>
<feature type="binding site" evidence="1">
    <location>
        <position position="144"/>
    </location>
    <ligand>
        <name>4-CDP-2-C-methyl-D-erythritol 2-phosphate</name>
        <dbReference type="ChEBI" id="CHEBI:57919"/>
    </ligand>
</feature>
<feature type="site" description="Transition state stabilizer" evidence="1">
    <location>
        <position position="36"/>
    </location>
</feature>
<feature type="site" description="Transition state stabilizer" evidence="1">
    <location>
        <position position="135"/>
    </location>
</feature>
<comment type="function">
    <text evidence="1">Involved in the biosynthesis of isopentenyl diphosphate (IPP) and dimethylallyl diphosphate (DMAPP), two major building blocks of isoprenoid compounds. Catalyzes the conversion of 4-diphosphocytidyl-2-C-methyl-D-erythritol 2-phosphate (CDP-ME2P) to 2-C-methyl-D-erythritol 2,4-cyclodiphosphate (ME-CPP) with a corresponding release of cytidine 5-monophosphate (CMP).</text>
</comment>
<comment type="catalytic activity">
    <reaction evidence="1">
        <text>4-CDP-2-C-methyl-D-erythritol 2-phosphate = 2-C-methyl-D-erythritol 2,4-cyclic diphosphate + CMP</text>
        <dbReference type="Rhea" id="RHEA:23864"/>
        <dbReference type="ChEBI" id="CHEBI:57919"/>
        <dbReference type="ChEBI" id="CHEBI:58483"/>
        <dbReference type="ChEBI" id="CHEBI:60377"/>
        <dbReference type="EC" id="4.6.1.12"/>
    </reaction>
</comment>
<comment type="cofactor">
    <cofactor evidence="1">
        <name>a divalent metal cation</name>
        <dbReference type="ChEBI" id="CHEBI:60240"/>
    </cofactor>
    <text evidence="1">Binds 1 divalent metal cation per subunit.</text>
</comment>
<comment type="pathway">
    <text evidence="1">Isoprenoid biosynthesis; isopentenyl diphosphate biosynthesis via DXP pathway; isopentenyl diphosphate from 1-deoxy-D-xylulose 5-phosphate: step 4/6.</text>
</comment>
<comment type="subunit">
    <text evidence="1">Homotrimer.</text>
</comment>
<comment type="similarity">
    <text evidence="1">Belongs to the IspF family.</text>
</comment>
<sequence>MRIGHGFDVHKFGENGSGPLIIGGVRIPYEKGLLAHSDGDVALHAATDALLGAAALGDIGKLFPDTDPAFKGADSRGLLREAYRRILAKGYKLGNLDITIIAQAPKMAPHIPQMRVNLAEDLQCHMDDINVKATTTEQLGFTGRGEGIACEAVVLLVNVEQG</sequence>
<evidence type="ECO:0000255" key="1">
    <source>
        <dbReference type="HAMAP-Rule" id="MF_00107"/>
    </source>
</evidence>
<proteinExistence type="inferred from homology"/>
<reference key="1">
    <citation type="journal article" date="2010" name="J. Bacteriol.">
        <title>Genome sequence of the deep-rooted Yersinia pestis strain Angola reveals new insights into the evolution and pangenome of the plague bacterium.</title>
        <authorList>
            <person name="Eppinger M."/>
            <person name="Worsham P.L."/>
            <person name="Nikolich M.P."/>
            <person name="Riley D.R."/>
            <person name="Sebastian Y."/>
            <person name="Mou S."/>
            <person name="Achtman M."/>
            <person name="Lindler L.E."/>
            <person name="Ravel J."/>
        </authorList>
    </citation>
    <scope>NUCLEOTIDE SEQUENCE [LARGE SCALE GENOMIC DNA]</scope>
    <source>
        <strain>Angola</strain>
    </source>
</reference>
<protein>
    <recommendedName>
        <fullName evidence="1">2-C-methyl-D-erythritol 2,4-cyclodiphosphate synthase</fullName>
        <shortName evidence="1">MECDP-synthase</shortName>
        <shortName evidence="1">MECPP-synthase</shortName>
        <shortName evidence="1">MECPS</shortName>
        <ecNumber evidence="1">4.6.1.12</ecNumber>
    </recommendedName>
</protein>
<gene>
    <name evidence="1" type="primary">ispF</name>
    <name type="ordered locus">YpAngola_A0963</name>
</gene>
<name>ISPF_YERPG</name>
<keyword id="KW-0414">Isoprene biosynthesis</keyword>
<keyword id="KW-0456">Lyase</keyword>
<keyword id="KW-0479">Metal-binding</keyword>